<name>ENO_AERHY</name>
<comment type="function">
    <text evidence="1 2 3">Catalyzes the reversible conversion of 2-phosphoglycerate (2-PG) into phosphoenolpyruvate (PEP) (PubMed:12668143, PubMed:19270100). It is essential for the degradation of carbohydrates via glycolysis.</text>
</comment>
<comment type="function">
    <text evidence="2 3">'Moonlights' as a plasminogen receptor and plasmin activator. Binds host (human) plasminogen in vitro (PubMed:12668143). Binds human plasmin and plasminogen on the cell surface; enhances the activity of host tissue-specific plasminogen activator (tPA) (PubMed:19270100). Plasmin bound to bacteria is partially protected from its physiological inhibitor alpha-2AP (SERPINF2) (PubMed:19270100).</text>
</comment>
<comment type="catalytic activity">
    <reaction evidence="1 2">
        <text>(2R)-2-phosphoglycerate = phosphoenolpyruvate + H2O</text>
        <dbReference type="Rhea" id="RHEA:10164"/>
        <dbReference type="ChEBI" id="CHEBI:15377"/>
        <dbReference type="ChEBI" id="CHEBI:58289"/>
        <dbReference type="ChEBI" id="CHEBI:58702"/>
        <dbReference type="EC" id="4.2.1.11"/>
    </reaction>
    <physiologicalReaction direction="left-to-right" evidence="2">
        <dbReference type="Rhea" id="RHEA:10165"/>
    </physiologicalReaction>
</comment>
<comment type="cofactor">
    <cofactor evidence="1">
        <name>Mg(2+)</name>
        <dbReference type="ChEBI" id="CHEBI:18420"/>
    </cofactor>
    <text evidence="1">Binds a second Mg(2+) ion via substrate during catalysis.</text>
</comment>
<comment type="pathway">
    <text evidence="1">Carbohydrate degradation; glycolysis; pyruvate from D-glyceraldehyde 3-phosphate: step 4/5.</text>
</comment>
<comment type="subunit">
    <text evidence="1">Component of the RNA degradosome, a multiprotein complex involved in RNA processing and mRNA degradation.</text>
</comment>
<comment type="subcellular location">
    <subcellularLocation>
        <location evidence="2">Cell inner membrane</location>
    </subcellularLocation>
    <subcellularLocation>
        <location evidence="2">Cell outer membrane</location>
    </subcellularLocation>
    <subcellularLocation>
        <location evidence="1 2">Cytoplasm</location>
    </subcellularLocation>
    <subcellularLocation>
        <location evidence="1 2">Secreted</location>
    </subcellularLocation>
    <subcellularLocation>
        <location evidence="1 3">Cell surface</location>
    </subcellularLocation>
    <text evidence="1 3">Fractions of enolase are present in both the cytoplasm and on the cell surface (PubMed:19270100).</text>
</comment>
<comment type="induction">
    <text evidence="2">Three- to five-fold induced in a murine peritoneal culture (MPC) model as opposed to in vitro culture (PubMed:12668143).</text>
</comment>
<comment type="domain">
    <text evidence="3">A 'plasminogen-binding motif peptide' partially inhibits binding of plasminogen to enolase in vitro; mutating 2 of the residues restores plasminogen-enolase binding (PubMed:19270100).</text>
</comment>
<comment type="disruption phenotype">
    <text evidence="3">Probably essential, it cannot be deleted unless another copy is present in the bacterial cell (PubMed:19270100).</text>
</comment>
<comment type="miscellaneous">
    <text evidence="3 5">Pathogens have evolved a strategy to activate host plasminogen and manipulate plasmin activity for their benefit; plasminogen binding (even without its activation to plasmin) increases their adherence to host cells. Plasmin activity leads to degradation of host extracellular matrix proteins like collagen, fibronectin and laminin, facilitating bacterial dissemination and disease spread (Probable). Vaccinating mice with recombinant enolase provides substantial protection against subsequent A.hydrophila infection, suggesting it could be used as a vaccine (PubMed:19270100).</text>
</comment>
<comment type="similarity">
    <text evidence="1">Belongs to the enolase family.</text>
</comment>
<evidence type="ECO:0000255" key="1">
    <source>
        <dbReference type="HAMAP-Rule" id="MF_00318"/>
    </source>
</evidence>
<evidence type="ECO:0000269" key="2">
    <source>
    </source>
</evidence>
<evidence type="ECO:0000269" key="3">
    <source>
    </source>
</evidence>
<evidence type="ECO:0000303" key="4">
    <source>
    </source>
</evidence>
<evidence type="ECO:0000305" key="5">
    <source>
    </source>
</evidence>
<proteinExistence type="evidence at protein level"/>
<accession>Q8GE63</accession>
<reference key="1">
    <citation type="journal article" date="2003" name="Microb. Pathog.">
        <title>Differential expression of the enolase gene under in vivo versus in vitro growth conditions of Aeromonas hydrophila.</title>
        <authorList>
            <person name="Sha J."/>
            <person name="Galindo C.L."/>
            <person name="Pancholi V."/>
            <person name="Popov V.L."/>
            <person name="Zhao Y."/>
            <person name="Houston C.W."/>
            <person name="Chopra A.K."/>
        </authorList>
    </citation>
    <scope>NUCLEOTIDE SEQUENCE [GENOMIC DNA]</scope>
    <scope>FUNCTION</scope>
    <scope>PLASMINOGEN-BINDING</scope>
    <scope>CATALYTIC ACTIVITY</scope>
    <scope>SUBCELLULAR LOCATION</scope>
    <scope>INDUCTION</scope>
    <source>
        <strain>SSU</strain>
    </source>
</reference>
<reference key="2">
    <citation type="journal article" date="2009" name="J. Bacteriol.">
        <title>Surface-expressed enolase contributes to the pathogenesis of clinical isolate SSU of Aeromonas hydrophila.</title>
        <authorList>
            <person name="Sha J."/>
            <person name="Erova T.E."/>
            <person name="Alyea R.A."/>
            <person name="Wang S."/>
            <person name="Olano J.P."/>
            <person name="Pancholi V."/>
            <person name="Chopra A.K."/>
        </authorList>
    </citation>
    <scope>FUNCTION</scope>
    <scope>CATALYTIC ACTIVITY</scope>
    <scope>PLASMINOGEN-BINDING</scope>
    <scope>PLASMIN-BINDING</scope>
    <scope>SUBCELLULAR LOCATION</scope>
    <scope>DISRUPTION PHENOTYPEDIS</scope>
    <scope>PLASMINOGEN-BINDING MOTIF</scope>
    <scope>MUTAGENESIS OF 256-GLU--LYS-258; LYS-343; LYS-394; LYS-420; LYS-427 AND LYS-430</scope>
    <source>
        <strain>SSU</strain>
    </source>
</reference>
<sequence>MSKIVKVIGREIIDSRGNPTVEAEVHLEGGFVGMAAAPSGASTGSREALELRDGDKSRFLGKGVLKALEAVNGPIAQALLGKDAKDQATVDQIMIDLDGTENKSKFGANAILAVSLANAKAAAAAKGMPLYAHIAELNGTPGVYSMPLPMMNIINGGEHADNNVDIQEFMIQPVGAKTLKEAVRMGAEVFHNLAKVLKSKGYNTAVGDEGGFAPNLKSNAEALEVIAEAVAAAGYKLGTDVTLAMDCAASEFYDAEKKEYNLKGEGRVFTSNGFSDFLEELTAKFPIVSIEDGLDESDWEGFAYQTQKLGKKIQIVGDDLFVTNTKILKRGIDNGIANSILIKFNQIGSLTETLAAIKMAKDAGYTAVISHRSGETEDATIADLAVGTAAGQIKTGSMSRSDRVAKYNQLIRIEEALGAKAPFRGLKEVKNQA</sequence>
<keyword id="KW-0997">Cell inner membrane</keyword>
<keyword id="KW-1003">Cell membrane</keyword>
<keyword id="KW-0998">Cell outer membrane</keyword>
<keyword id="KW-0963">Cytoplasm</keyword>
<keyword id="KW-0324">Glycolysis</keyword>
<keyword id="KW-0456">Lyase</keyword>
<keyword id="KW-0460">Magnesium</keyword>
<keyword id="KW-0472">Membrane</keyword>
<keyword id="KW-0479">Metal-binding</keyword>
<keyword id="KW-0964">Secreted</keyword>
<keyword id="KW-0843">Virulence</keyword>
<feature type="chain" id="PRO_0000133828" description="Enolase">
    <location>
        <begin position="1"/>
        <end position="433"/>
    </location>
</feature>
<feature type="short sequence motif" description="Plasminogen-binding motif" evidence="3">
    <location>
        <begin position="252"/>
        <end position="260"/>
    </location>
</feature>
<feature type="active site" description="Proton donor" evidence="1">
    <location>
        <position position="209"/>
    </location>
</feature>
<feature type="active site" description="Proton acceptor" evidence="1">
    <location>
        <position position="343"/>
    </location>
</feature>
<feature type="binding site" evidence="1">
    <location>
        <position position="167"/>
    </location>
    <ligand>
        <name>(2R)-2-phosphoglycerate</name>
        <dbReference type="ChEBI" id="CHEBI:58289"/>
    </ligand>
</feature>
<feature type="binding site" evidence="1">
    <location>
        <position position="246"/>
    </location>
    <ligand>
        <name>Mg(2+)</name>
        <dbReference type="ChEBI" id="CHEBI:18420"/>
    </ligand>
</feature>
<feature type="binding site" evidence="1">
    <location>
        <position position="291"/>
    </location>
    <ligand>
        <name>Mg(2+)</name>
        <dbReference type="ChEBI" id="CHEBI:18420"/>
    </ligand>
</feature>
<feature type="binding site" evidence="1">
    <location>
        <position position="318"/>
    </location>
    <ligand>
        <name>Mg(2+)</name>
        <dbReference type="ChEBI" id="CHEBI:18420"/>
    </ligand>
</feature>
<feature type="binding site" evidence="1">
    <location>
        <position position="343"/>
    </location>
    <ligand>
        <name>(2R)-2-phosphoglycerate</name>
        <dbReference type="ChEBI" id="CHEBI:58289"/>
    </ligand>
</feature>
<feature type="binding site" evidence="1">
    <location>
        <position position="372"/>
    </location>
    <ligand>
        <name>(2R)-2-phosphoglycerate</name>
        <dbReference type="ChEBI" id="CHEBI:58289"/>
    </ligand>
</feature>
<feature type="binding site" evidence="1">
    <location>
        <position position="373"/>
    </location>
    <ligand>
        <name>(2R)-2-phosphoglycerate</name>
        <dbReference type="ChEBI" id="CHEBI:58289"/>
    </ligand>
</feature>
<feature type="binding site" evidence="1">
    <location>
        <position position="394"/>
    </location>
    <ligand>
        <name>(2R)-2-phosphoglycerate</name>
        <dbReference type="ChEBI" id="CHEBI:58289"/>
    </ligand>
</feature>
<feature type="mutagenesis site" description="No longer inhibits plasminogen binding (in plasminogen-binding motif peptide)." evidence="3">
    <original>EKK</original>
    <variation>GKL</variation>
    <location>
        <begin position="256"/>
        <end position="258"/>
    </location>
</feature>
<feature type="mutagenesis site" description="Wild-type plasminogen binding in vitro, 21% reverse activity (PEP to 2-PG)." evidence="3">
    <original>K</original>
    <variation>Q</variation>
    <location>
        <position position="343"/>
    </location>
</feature>
<feature type="mutagenesis site" description="Wild-type plasminogen binding in vitro, loss of reverse activity (PEP to 2-PG)." evidence="3">
    <original>K</original>
    <variation>M</variation>
    <location>
        <position position="394"/>
    </location>
</feature>
<feature type="mutagenesis site" description="50% plasminogen binding in vitro, loss of reverse activity (PEP to 2-PG)." evidence="3">
    <original>K</original>
    <variation>L</variation>
    <location>
        <position position="420"/>
    </location>
</feature>
<feature type="mutagenesis site" description="60% plasminogen binding in vitro, 10% reverse activity (PEP to 2-PG)." evidence="3">
    <original>K</original>
    <variation>N</variation>
    <location>
        <position position="427"/>
    </location>
</feature>
<feature type="mutagenesis site" description="Wild-type plasminogen binding in vitro,35% reverse activity (PEP to 2-PG)." evidence="3">
    <original>K</original>
    <variation>R</variation>
    <location>
        <position position="430"/>
    </location>
</feature>
<protein>
    <recommendedName>
        <fullName evidence="1 4">Enolase</fullName>
        <ecNumber evidence="1 2">4.2.1.11</ecNumber>
    </recommendedName>
    <alternativeName>
        <fullName evidence="1">2-phospho-D-glycerate hydro-lyase</fullName>
    </alternativeName>
    <alternativeName>
        <fullName evidence="1">2-phosphoglycerate dehydratase</fullName>
    </alternativeName>
</protein>
<dbReference type="EC" id="4.2.1.11" evidence="1 2"/>
<dbReference type="EMBL" id="AY141757">
    <property type="protein sequence ID" value="AAN28926.1"/>
    <property type="molecule type" value="Genomic_DNA"/>
</dbReference>
<dbReference type="SMR" id="Q8GE63"/>
<dbReference type="MoonProt" id="Q8GE63"/>
<dbReference type="eggNOG" id="COG0148">
    <property type="taxonomic scope" value="Bacteria"/>
</dbReference>
<dbReference type="UniPathway" id="UPA00109">
    <property type="reaction ID" value="UER00187"/>
</dbReference>
<dbReference type="GO" id="GO:0009279">
    <property type="term" value="C:cell outer membrane"/>
    <property type="evidence" value="ECO:0007669"/>
    <property type="project" value="UniProtKB-SubCell"/>
</dbReference>
<dbReference type="GO" id="GO:0009986">
    <property type="term" value="C:cell surface"/>
    <property type="evidence" value="ECO:0007669"/>
    <property type="project" value="UniProtKB-SubCell"/>
</dbReference>
<dbReference type="GO" id="GO:0005576">
    <property type="term" value="C:extracellular region"/>
    <property type="evidence" value="ECO:0007669"/>
    <property type="project" value="UniProtKB-SubCell"/>
</dbReference>
<dbReference type="GO" id="GO:0000015">
    <property type="term" value="C:phosphopyruvate hydratase complex"/>
    <property type="evidence" value="ECO:0007669"/>
    <property type="project" value="InterPro"/>
</dbReference>
<dbReference type="GO" id="GO:0005886">
    <property type="term" value="C:plasma membrane"/>
    <property type="evidence" value="ECO:0007669"/>
    <property type="project" value="UniProtKB-SubCell"/>
</dbReference>
<dbReference type="GO" id="GO:0000287">
    <property type="term" value="F:magnesium ion binding"/>
    <property type="evidence" value="ECO:0007669"/>
    <property type="project" value="UniProtKB-UniRule"/>
</dbReference>
<dbReference type="GO" id="GO:0004634">
    <property type="term" value="F:phosphopyruvate hydratase activity"/>
    <property type="evidence" value="ECO:0007669"/>
    <property type="project" value="UniProtKB-UniRule"/>
</dbReference>
<dbReference type="GO" id="GO:0006096">
    <property type="term" value="P:glycolytic process"/>
    <property type="evidence" value="ECO:0007669"/>
    <property type="project" value="UniProtKB-UniRule"/>
</dbReference>
<dbReference type="CDD" id="cd03313">
    <property type="entry name" value="enolase"/>
    <property type="match status" value="1"/>
</dbReference>
<dbReference type="FunFam" id="3.20.20.120:FF:000001">
    <property type="entry name" value="Enolase"/>
    <property type="match status" value="1"/>
</dbReference>
<dbReference type="FunFam" id="3.30.390.10:FF:000001">
    <property type="entry name" value="Enolase"/>
    <property type="match status" value="1"/>
</dbReference>
<dbReference type="Gene3D" id="3.20.20.120">
    <property type="entry name" value="Enolase-like C-terminal domain"/>
    <property type="match status" value="1"/>
</dbReference>
<dbReference type="Gene3D" id="3.30.390.10">
    <property type="entry name" value="Enolase-like, N-terminal domain"/>
    <property type="match status" value="1"/>
</dbReference>
<dbReference type="HAMAP" id="MF_00318">
    <property type="entry name" value="Enolase"/>
    <property type="match status" value="1"/>
</dbReference>
<dbReference type="InterPro" id="IPR000941">
    <property type="entry name" value="Enolase"/>
</dbReference>
<dbReference type="InterPro" id="IPR036849">
    <property type="entry name" value="Enolase-like_C_sf"/>
</dbReference>
<dbReference type="InterPro" id="IPR029017">
    <property type="entry name" value="Enolase-like_N"/>
</dbReference>
<dbReference type="InterPro" id="IPR020810">
    <property type="entry name" value="Enolase_C"/>
</dbReference>
<dbReference type="InterPro" id="IPR020809">
    <property type="entry name" value="Enolase_CS"/>
</dbReference>
<dbReference type="InterPro" id="IPR020811">
    <property type="entry name" value="Enolase_N"/>
</dbReference>
<dbReference type="NCBIfam" id="TIGR01060">
    <property type="entry name" value="eno"/>
    <property type="match status" value="1"/>
</dbReference>
<dbReference type="PANTHER" id="PTHR11902">
    <property type="entry name" value="ENOLASE"/>
    <property type="match status" value="1"/>
</dbReference>
<dbReference type="PANTHER" id="PTHR11902:SF1">
    <property type="entry name" value="ENOLASE"/>
    <property type="match status" value="1"/>
</dbReference>
<dbReference type="Pfam" id="PF00113">
    <property type="entry name" value="Enolase_C"/>
    <property type="match status" value="1"/>
</dbReference>
<dbReference type="Pfam" id="PF03952">
    <property type="entry name" value="Enolase_N"/>
    <property type="match status" value="1"/>
</dbReference>
<dbReference type="PIRSF" id="PIRSF001400">
    <property type="entry name" value="Enolase"/>
    <property type="match status" value="1"/>
</dbReference>
<dbReference type="PRINTS" id="PR00148">
    <property type="entry name" value="ENOLASE"/>
</dbReference>
<dbReference type="SFLD" id="SFLDF00002">
    <property type="entry name" value="enolase"/>
    <property type="match status" value="1"/>
</dbReference>
<dbReference type="SFLD" id="SFLDG00178">
    <property type="entry name" value="enolase"/>
    <property type="match status" value="1"/>
</dbReference>
<dbReference type="SMART" id="SM01192">
    <property type="entry name" value="Enolase_C"/>
    <property type="match status" value="1"/>
</dbReference>
<dbReference type="SMART" id="SM01193">
    <property type="entry name" value="Enolase_N"/>
    <property type="match status" value="1"/>
</dbReference>
<dbReference type="SUPFAM" id="SSF51604">
    <property type="entry name" value="Enolase C-terminal domain-like"/>
    <property type="match status" value="1"/>
</dbReference>
<dbReference type="SUPFAM" id="SSF54826">
    <property type="entry name" value="Enolase N-terminal domain-like"/>
    <property type="match status" value="1"/>
</dbReference>
<dbReference type="PROSITE" id="PS00164">
    <property type="entry name" value="ENOLASE"/>
    <property type="match status" value="1"/>
</dbReference>
<gene>
    <name evidence="1" type="primary">eno</name>
</gene>
<organism>
    <name type="scientific">Aeromonas hydrophila</name>
    <dbReference type="NCBI Taxonomy" id="644"/>
    <lineage>
        <taxon>Bacteria</taxon>
        <taxon>Pseudomonadati</taxon>
        <taxon>Pseudomonadota</taxon>
        <taxon>Gammaproteobacteria</taxon>
        <taxon>Aeromonadales</taxon>
        <taxon>Aeromonadaceae</taxon>
        <taxon>Aeromonas</taxon>
    </lineage>
</organism>